<feature type="signal peptide" evidence="3">
    <location>
        <begin position="1"/>
        <end position="22"/>
    </location>
</feature>
<feature type="chain" id="PRO_0000221569" description="Myotoxin" evidence="5">
    <location>
        <begin position="23"/>
        <end position="70"/>
    </location>
</feature>
<feature type="disulfide bond" evidence="2">
    <location>
        <begin position="26"/>
        <end position="58"/>
    </location>
</feature>
<feature type="disulfide bond" evidence="2">
    <location>
        <begin position="33"/>
        <end position="52"/>
    </location>
</feature>
<feature type="disulfide bond" evidence="2">
    <location>
        <begin position="40"/>
        <end position="59"/>
    </location>
</feature>
<dbReference type="EMBL" id="JF895769">
    <property type="protein sequence ID" value="AEU60012.1"/>
    <property type="molecule type" value="mRNA"/>
</dbReference>
<dbReference type="EMBL" id="GAKQ01000002">
    <property type="protein sequence ID" value="JAA97967.1"/>
    <property type="molecule type" value="mRNA"/>
</dbReference>
<dbReference type="EMBL" id="GAKQ01000001">
    <property type="protein sequence ID" value="JAA97968.1"/>
    <property type="molecule type" value="mRNA"/>
</dbReference>
<dbReference type="EMBL" id="GAKR01000001">
    <property type="protein sequence ID" value="JAA97984.1"/>
    <property type="molecule type" value="mRNA"/>
</dbReference>
<dbReference type="EMBL" id="GAKS01000002">
    <property type="protein sequence ID" value="JAA98014.1"/>
    <property type="molecule type" value="mRNA"/>
</dbReference>
<dbReference type="EMBL" id="GAKS01000001">
    <property type="protein sequence ID" value="JAA98015.1"/>
    <property type="molecule type" value="mRNA"/>
</dbReference>
<dbReference type="EMBL" id="GALC01000001">
    <property type="protein sequence ID" value="JAA98041.1"/>
    <property type="molecule type" value="mRNA"/>
</dbReference>
<dbReference type="PIR" id="A01737">
    <property type="entry name" value="CXRSCH"/>
</dbReference>
<dbReference type="SMR" id="P01477"/>
<dbReference type="GO" id="GO:0005576">
    <property type="term" value="C:extracellular region"/>
    <property type="evidence" value="ECO:0007669"/>
    <property type="project" value="UniProtKB-SubCell"/>
</dbReference>
<dbReference type="GO" id="GO:0015459">
    <property type="term" value="F:potassium channel regulator activity"/>
    <property type="evidence" value="ECO:0007669"/>
    <property type="project" value="UniProtKB-KW"/>
</dbReference>
<dbReference type="GO" id="GO:0090729">
    <property type="term" value="F:toxin activity"/>
    <property type="evidence" value="ECO:0007669"/>
    <property type="project" value="UniProtKB-KW"/>
</dbReference>
<dbReference type="GO" id="GO:0044564">
    <property type="term" value="P:envenomation resulting in occlusion of the pore of voltage-gated potassium channel in another organism"/>
    <property type="evidence" value="ECO:0000250"/>
    <property type="project" value="UniProtKB"/>
</dbReference>
<dbReference type="FunFam" id="2.20.20.10:FF:000001">
    <property type="entry name" value="Crotamine"/>
    <property type="match status" value="1"/>
</dbReference>
<dbReference type="Gene3D" id="2.20.20.10">
    <property type="entry name" value="Anthopleurin-A"/>
    <property type="match status" value="1"/>
</dbReference>
<dbReference type="InterPro" id="IPR023355">
    <property type="entry name" value="Myo_ane_neurotoxin_sf"/>
</dbReference>
<dbReference type="InterPro" id="IPR000881">
    <property type="entry name" value="Myotoxin"/>
</dbReference>
<dbReference type="Pfam" id="PF00819">
    <property type="entry name" value="Myotoxins"/>
    <property type="match status" value="1"/>
</dbReference>
<dbReference type="PRINTS" id="PR00283">
    <property type="entry name" value="MYOTOXIN"/>
</dbReference>
<dbReference type="SUPFAM" id="SSF57392">
    <property type="entry name" value="Defensin-like"/>
    <property type="match status" value="1"/>
</dbReference>
<dbReference type="PROSITE" id="PS00459">
    <property type="entry name" value="MYOTOXINS_1"/>
    <property type="match status" value="1"/>
</dbReference>
<dbReference type="PROSITE" id="PS51345">
    <property type="entry name" value="MYOTOXINS_2"/>
    <property type="match status" value="1"/>
</dbReference>
<keyword id="KW-0929">Antimicrobial</keyword>
<keyword id="KW-0903">Direct protein sequencing</keyword>
<keyword id="KW-1015">Disulfide bond</keyword>
<keyword id="KW-0872">Ion channel impairing toxin</keyword>
<keyword id="KW-0959">Myotoxin</keyword>
<keyword id="KW-0528">Neurotoxin</keyword>
<keyword id="KW-0632">Potassium channel impairing toxin</keyword>
<keyword id="KW-0964">Secreted</keyword>
<keyword id="KW-0732">Signal</keyword>
<keyword id="KW-0800">Toxin</keyword>
<keyword id="KW-1220">Voltage-gated potassium channel impairing toxin</keyword>
<proteinExistence type="evidence at protein level"/>
<accession>P01477</accession>
<accession>G9DCI6</accession>
<evidence type="ECO:0000250" key="1"/>
<evidence type="ECO:0000250" key="2">
    <source>
        <dbReference type="UniProtKB" id="Q9PWF3"/>
    </source>
</evidence>
<evidence type="ECO:0000269" key="3">
    <source>
    </source>
</evidence>
<evidence type="ECO:0000305" key="4"/>
<evidence type="ECO:0000305" key="5">
    <source>
    </source>
</evidence>
<protein>
    <recommendedName>
        <fullName>Myotoxin</fullName>
    </recommendedName>
    <alternativeName>
        <fullName>Crotamine-4</fullName>
    </alternativeName>
    <alternativeName>
        <fullName>Toxic peptide C</fullName>
    </alternativeName>
</protein>
<organism>
    <name type="scientific">Crotalus helleri</name>
    <name type="common">Southern pacific rattlesnake</name>
    <name type="synonym">Crotalus oreganus helleri</name>
    <dbReference type="NCBI Taxonomy" id="8741"/>
    <lineage>
        <taxon>Eukaryota</taxon>
        <taxon>Metazoa</taxon>
        <taxon>Chordata</taxon>
        <taxon>Craniata</taxon>
        <taxon>Vertebrata</taxon>
        <taxon>Euteleostomi</taxon>
        <taxon>Lepidosauria</taxon>
        <taxon>Squamata</taxon>
        <taxon>Bifurcata</taxon>
        <taxon>Unidentata</taxon>
        <taxon>Episquamata</taxon>
        <taxon>Toxicofera</taxon>
        <taxon>Serpentes</taxon>
        <taxon>Colubroidea</taxon>
        <taxon>Viperidae</taxon>
        <taxon>Crotalinae</taxon>
        <taxon>Crotalus</taxon>
    </lineage>
</organism>
<name>MYXC_CROHE</name>
<comment type="function">
    <text evidence="2">Cationic peptide that possesses multiple functions. It acts as a cell-penetrating peptide (CPP), and as a potent voltage-gated potassium channel (Kv) inhibitor. It exhibits antimicrobial activities, hind limb paralysis, and severe muscle necrosis by a non-enzymatic mechanism (By similarity).</text>
</comment>
<comment type="subunit">
    <text evidence="1">Monomer.</text>
</comment>
<comment type="subcellular location">
    <subcellularLocation>
        <location evidence="3">Secreted</location>
    </subcellularLocation>
</comment>
<comment type="tissue specificity">
    <text evidence="5">Expressed by the venom gland.</text>
</comment>
<comment type="toxic dose">
    <text evidence="3">LD(50) is 1.96 mg/kg by intravenous injection.</text>
</comment>
<comment type="similarity">
    <text evidence="4">Belongs to the crotamine-myotoxin family.</text>
</comment>
<reference key="1">
    <citation type="submission" date="2011-04" db="EMBL/GenBank/DDBJ databases">
        <title>cDNA clones from the library of Crotalus oreganus helleri (Southern Pacific Rattlesnake) venom gland.</title>
        <authorList>
            <person name="Sanchez E."/>
        </authorList>
    </citation>
    <scope>NUCLEOTIDE SEQUENCE [MRNA]</scope>
    <source>
        <tissue>Venom gland</tissue>
    </source>
</reference>
<reference key="2">
    <citation type="submission" date="2013-07" db="EMBL/GenBank/DDBJ databases">
        <title>Clinical and biodiscovery implications of intra-specific venom variation in the medically important Southern Pacific Rattlesnake (Crotalus oreganus helleri).</title>
        <authorList>
            <person name="Fry B.G."/>
        </authorList>
    </citation>
    <scope>NUCLEOTIDE SEQUENCE [MRNA]</scope>
    <source>
        <tissue>Venom gland</tissue>
    </source>
</reference>
<reference key="3">
    <citation type="journal article" date="1978" name="Toxicon">
        <title>Some chemical properties of the venom of the rattlesnake, Crotalus viridis helleri.</title>
        <authorList>
            <person name="Maeda N."/>
            <person name="Tamiya N."/>
            <person name="Pattabhiraman T.R."/>
            <person name="Russell F.E."/>
        </authorList>
    </citation>
    <scope>PROTEIN SEQUENCE OF 23-65</scope>
    <scope>TOXIC DOSE</scope>
    <scope>SUBCELLULAR LOCATION</scope>
    <source>
        <tissue>Venom</tissue>
    </source>
</reference>
<sequence length="70" mass="7989">MKILYLLFAFLFLAFLSEPGNAYKRCHKKGGHCFPKTVICLPPSSDFGKMDCRWKWKCCKKGSVNNAISI</sequence>